<keyword id="KW-0929">Antimicrobial</keyword>
<keyword id="KW-0081">Bacteriolytic enzyme</keyword>
<keyword id="KW-0131">Cell cycle</keyword>
<keyword id="KW-0132">Cell division</keyword>
<keyword id="KW-0961">Cell wall biogenesis/degradation</keyword>
<keyword id="KW-0378">Hydrolase</keyword>
<keyword id="KW-0677">Repeat</keyword>
<keyword id="KW-0964">Secreted</keyword>
<keyword id="KW-0717">Septation</keyword>
<keyword id="KW-0732">Signal</keyword>
<keyword id="KW-0843">Virulence</keyword>
<evidence type="ECO:0000250" key="1"/>
<evidence type="ECO:0000255" key="2"/>
<evidence type="ECO:0000255" key="3">
    <source>
        <dbReference type="PROSITE-ProRule" id="PRU00048"/>
    </source>
</evidence>
<evidence type="ECO:0000255" key="4">
    <source>
        <dbReference type="PROSITE-ProRule" id="PRU01118"/>
    </source>
</evidence>
<evidence type="ECO:0000256" key="5">
    <source>
        <dbReference type="SAM" id="MobiDB-lite"/>
    </source>
</evidence>
<feature type="signal peptide" evidence="2">
    <location>
        <begin position="1"/>
        <end position="25"/>
    </location>
</feature>
<feature type="chain" id="PRO_0000231624" description="N-acetylmuramoyl-L-alanine amidase sle1">
    <location>
        <begin position="26"/>
        <end position="334"/>
    </location>
</feature>
<feature type="domain" description="LysM 1" evidence="4">
    <location>
        <begin position="27"/>
        <end position="70"/>
    </location>
</feature>
<feature type="domain" description="LysM 2" evidence="4">
    <location>
        <begin position="91"/>
        <end position="134"/>
    </location>
</feature>
<feature type="domain" description="LysM 3" evidence="4">
    <location>
        <begin position="158"/>
        <end position="201"/>
    </location>
</feature>
<feature type="domain" description="Peptidase C51" evidence="3">
    <location>
        <begin position="210"/>
        <end position="334"/>
    </location>
</feature>
<feature type="region of interest" description="Disordered" evidence="5">
    <location>
        <begin position="71"/>
        <end position="90"/>
    </location>
</feature>
<feature type="region of interest" description="Disordered" evidence="5">
    <location>
        <begin position="137"/>
        <end position="156"/>
    </location>
</feature>
<feature type="compositionally biased region" description="Low complexity" evidence="5">
    <location>
        <begin position="71"/>
        <end position="86"/>
    </location>
</feature>
<protein>
    <recommendedName>
        <fullName>N-acetylmuramoyl-L-alanine amidase sle1</fullName>
        <ecNumber>3.5.1.28</ecNumber>
    </recommendedName>
</protein>
<name>SLE1_STAAR</name>
<reference key="1">
    <citation type="journal article" date="2004" name="Proc. Natl. Acad. Sci. U.S.A.">
        <title>Complete genomes of two clinical Staphylococcus aureus strains: evidence for the rapid evolution of virulence and drug resistance.</title>
        <authorList>
            <person name="Holden M.T.G."/>
            <person name="Feil E.J."/>
            <person name="Lindsay J.A."/>
            <person name="Peacock S.J."/>
            <person name="Day N.P.J."/>
            <person name="Enright M.C."/>
            <person name="Foster T.J."/>
            <person name="Moore C.E."/>
            <person name="Hurst L."/>
            <person name="Atkin R."/>
            <person name="Barron A."/>
            <person name="Bason N."/>
            <person name="Bentley S.D."/>
            <person name="Chillingworth C."/>
            <person name="Chillingworth T."/>
            <person name="Churcher C."/>
            <person name="Clark L."/>
            <person name="Corton C."/>
            <person name="Cronin A."/>
            <person name="Doggett J."/>
            <person name="Dowd L."/>
            <person name="Feltwell T."/>
            <person name="Hance Z."/>
            <person name="Harris B."/>
            <person name="Hauser H."/>
            <person name="Holroyd S."/>
            <person name="Jagels K."/>
            <person name="James K.D."/>
            <person name="Lennard N."/>
            <person name="Line A."/>
            <person name="Mayes R."/>
            <person name="Moule S."/>
            <person name="Mungall K."/>
            <person name="Ormond D."/>
            <person name="Quail M.A."/>
            <person name="Rabbinowitsch E."/>
            <person name="Rutherford K.M."/>
            <person name="Sanders M."/>
            <person name="Sharp S."/>
            <person name="Simmonds M."/>
            <person name="Stevens K."/>
            <person name="Whitehead S."/>
            <person name="Barrell B.G."/>
            <person name="Spratt B.G."/>
            <person name="Parkhill J."/>
        </authorList>
    </citation>
    <scope>NUCLEOTIDE SEQUENCE [LARGE SCALE GENOMIC DNA]</scope>
    <source>
        <strain>MRSA252</strain>
    </source>
</reference>
<organism>
    <name type="scientific">Staphylococcus aureus (strain MRSA252)</name>
    <dbReference type="NCBI Taxonomy" id="282458"/>
    <lineage>
        <taxon>Bacteria</taxon>
        <taxon>Bacillati</taxon>
        <taxon>Bacillota</taxon>
        <taxon>Bacilli</taxon>
        <taxon>Bacillales</taxon>
        <taxon>Staphylococcaceae</taxon>
        <taxon>Staphylococcus</taxon>
    </lineage>
</organism>
<sequence length="334" mass="36024">MQKKVIAAIIGTSAISAVAATQANAATTHTVKPGESVWAISNKYGISIAKLKSLNNLTSNLIFPNQVLKVSGSSNSTSNSSRPSTNSGGGSYYTVQAGDSLSLIASKYGTTYQNIMRLNGLNNFFIYPGQKLKVSGTASSSNSTSNSSRPSTNSSGGSYYTVQAGDSLSLIASKYGTTYQNIMRLNGLNNFFIYPGQKLKVTGNASTNSGSTTTTNRGYNTPVFNHQNLYTWGQCTYHVFNRRAEIGKGISTYWWNANNWDNAAAADGYTIDNRPTVGSIAQTDVGYYGHVMFVERVNNDGSILVSEMNYSAAPGILTYRTVPAYQVNNYRYIH</sequence>
<gene>
    <name type="primary">sle1</name>
    <name type="synonym">aaa</name>
    <name type="ordered locus">SAR0464</name>
</gene>
<dbReference type="EC" id="3.5.1.28"/>
<dbReference type="EMBL" id="BX571856">
    <property type="protein sequence ID" value="CAG39485.1"/>
    <property type="molecule type" value="Genomic_DNA"/>
</dbReference>
<dbReference type="RefSeq" id="WP_001170274.1">
    <property type="nucleotide sequence ID" value="NC_002952.2"/>
</dbReference>
<dbReference type="SMR" id="Q6GJK9"/>
<dbReference type="CAZy" id="CBM50">
    <property type="family name" value="Carbohydrate-Binding Module Family 50"/>
</dbReference>
<dbReference type="KEGG" id="sar:SAR0464"/>
<dbReference type="HOGENOM" id="CLU_016043_1_3_9"/>
<dbReference type="Proteomes" id="UP000000596">
    <property type="component" value="Chromosome"/>
</dbReference>
<dbReference type="GO" id="GO:0009986">
    <property type="term" value="C:cell surface"/>
    <property type="evidence" value="ECO:0007669"/>
    <property type="project" value="UniProtKB-SubCell"/>
</dbReference>
<dbReference type="GO" id="GO:0005576">
    <property type="term" value="C:extracellular region"/>
    <property type="evidence" value="ECO:0007669"/>
    <property type="project" value="UniProtKB-SubCell"/>
</dbReference>
<dbReference type="GO" id="GO:0008932">
    <property type="term" value="F:lytic endotransglycosylase activity"/>
    <property type="evidence" value="ECO:0007669"/>
    <property type="project" value="TreeGrafter"/>
</dbReference>
<dbReference type="GO" id="GO:0008745">
    <property type="term" value="F:N-acetylmuramoyl-L-alanine amidase activity"/>
    <property type="evidence" value="ECO:0007669"/>
    <property type="project" value="UniProtKB-EC"/>
</dbReference>
<dbReference type="GO" id="GO:0071555">
    <property type="term" value="P:cell wall organization"/>
    <property type="evidence" value="ECO:0007669"/>
    <property type="project" value="UniProtKB-KW"/>
</dbReference>
<dbReference type="GO" id="GO:0042742">
    <property type="term" value="P:defense response to bacterium"/>
    <property type="evidence" value="ECO:0007669"/>
    <property type="project" value="UniProtKB-KW"/>
</dbReference>
<dbReference type="GO" id="GO:0000917">
    <property type="term" value="P:division septum assembly"/>
    <property type="evidence" value="ECO:0007669"/>
    <property type="project" value="UniProtKB-KW"/>
</dbReference>
<dbReference type="GO" id="GO:0031640">
    <property type="term" value="P:killing of cells of another organism"/>
    <property type="evidence" value="ECO:0007669"/>
    <property type="project" value="UniProtKB-KW"/>
</dbReference>
<dbReference type="CDD" id="cd00118">
    <property type="entry name" value="LysM"/>
    <property type="match status" value="3"/>
</dbReference>
<dbReference type="Gene3D" id="3.90.1720.10">
    <property type="entry name" value="endopeptidase domain like (from Nostoc punctiforme)"/>
    <property type="match status" value="1"/>
</dbReference>
<dbReference type="Gene3D" id="3.10.350.10">
    <property type="entry name" value="LysM domain"/>
    <property type="match status" value="3"/>
</dbReference>
<dbReference type="InterPro" id="IPR007921">
    <property type="entry name" value="CHAP_dom"/>
</dbReference>
<dbReference type="InterPro" id="IPR018392">
    <property type="entry name" value="LysM_dom"/>
</dbReference>
<dbReference type="InterPro" id="IPR036779">
    <property type="entry name" value="LysM_dom_sf"/>
</dbReference>
<dbReference type="InterPro" id="IPR038765">
    <property type="entry name" value="Papain-like_cys_pep_sf"/>
</dbReference>
<dbReference type="PANTHER" id="PTHR33734">
    <property type="entry name" value="LYSM DOMAIN-CONTAINING GPI-ANCHORED PROTEIN 2"/>
    <property type="match status" value="1"/>
</dbReference>
<dbReference type="PANTHER" id="PTHR33734:SF22">
    <property type="entry name" value="MEMBRANE-BOUND LYTIC MUREIN TRANSGLYCOSYLASE D"/>
    <property type="match status" value="1"/>
</dbReference>
<dbReference type="Pfam" id="PF05257">
    <property type="entry name" value="CHAP"/>
    <property type="match status" value="1"/>
</dbReference>
<dbReference type="Pfam" id="PF01476">
    <property type="entry name" value="LysM"/>
    <property type="match status" value="3"/>
</dbReference>
<dbReference type="SMART" id="SM00257">
    <property type="entry name" value="LysM"/>
    <property type="match status" value="3"/>
</dbReference>
<dbReference type="SUPFAM" id="SSF54001">
    <property type="entry name" value="Cysteine proteinases"/>
    <property type="match status" value="1"/>
</dbReference>
<dbReference type="SUPFAM" id="SSF54106">
    <property type="entry name" value="LysM domain"/>
    <property type="match status" value="3"/>
</dbReference>
<dbReference type="PROSITE" id="PS50911">
    <property type="entry name" value="CHAP"/>
    <property type="match status" value="1"/>
</dbReference>
<dbReference type="PROSITE" id="PS51782">
    <property type="entry name" value="LYSM"/>
    <property type="match status" value="3"/>
</dbReference>
<proteinExistence type="inferred from homology"/>
<accession>Q6GJK9</accession>
<comment type="function">
    <text evidence="1">Peptidoglycan hydrolase involved in the splitting of the septum during cell division.</text>
</comment>
<comment type="catalytic activity">
    <reaction>
        <text>Hydrolyzes the link between N-acetylmuramoyl residues and L-amino acid residues in certain cell-wall glycopeptides.</text>
        <dbReference type="EC" id="3.5.1.28"/>
    </reaction>
</comment>
<comment type="subcellular location">
    <subcellularLocation>
        <location evidence="1">Secreted</location>
    </subcellularLocation>
    <subcellularLocation>
        <location evidence="1">Cell surface</location>
    </subcellularLocation>
</comment>